<accession>B2FSD7</accession>
<keyword id="KW-0997">Cell inner membrane</keyword>
<keyword id="KW-1003">Cell membrane</keyword>
<keyword id="KW-0407">Ion channel</keyword>
<keyword id="KW-0406">Ion transport</keyword>
<keyword id="KW-0472">Membrane</keyword>
<keyword id="KW-1185">Reference proteome</keyword>
<keyword id="KW-0812">Transmembrane</keyword>
<keyword id="KW-1133">Transmembrane helix</keyword>
<keyword id="KW-0813">Transport</keyword>
<reference key="1">
    <citation type="journal article" date="2008" name="Genome Biol.">
        <title>The complete genome, comparative and functional analysis of Stenotrophomonas maltophilia reveals an organism heavily shielded by drug resistance determinants.</title>
        <authorList>
            <person name="Crossman L.C."/>
            <person name="Gould V.C."/>
            <person name="Dow J.M."/>
            <person name="Vernikos G.S."/>
            <person name="Okazaki A."/>
            <person name="Sebaihia M."/>
            <person name="Saunders D."/>
            <person name="Arrowsmith C."/>
            <person name="Carver T."/>
            <person name="Peters N."/>
            <person name="Adlem E."/>
            <person name="Kerhornou A."/>
            <person name="Lord A."/>
            <person name="Murphy L."/>
            <person name="Seeger K."/>
            <person name="Squares R."/>
            <person name="Rutter S."/>
            <person name="Quail M.A."/>
            <person name="Rajandream M.A."/>
            <person name="Harris D."/>
            <person name="Churcher C."/>
            <person name="Bentley S.D."/>
            <person name="Parkhill J."/>
            <person name="Thomson N.R."/>
            <person name="Avison M.B."/>
        </authorList>
    </citation>
    <scope>NUCLEOTIDE SEQUENCE [LARGE SCALE GENOMIC DNA]</scope>
    <source>
        <strain>K279a</strain>
    </source>
</reference>
<feature type="chain" id="PRO_1000094929" description="Large-conductance mechanosensitive channel">
    <location>
        <begin position="1"/>
        <end position="134"/>
    </location>
</feature>
<feature type="transmembrane region" description="Helical" evidence="1">
    <location>
        <begin position="16"/>
        <end position="36"/>
    </location>
</feature>
<feature type="transmembrane region" description="Helical" evidence="1">
    <location>
        <begin position="81"/>
        <end position="101"/>
    </location>
</feature>
<dbReference type="EMBL" id="AM743169">
    <property type="protein sequence ID" value="CAQ47191.1"/>
    <property type="molecule type" value="Genomic_DNA"/>
</dbReference>
<dbReference type="RefSeq" id="WP_005410819.1">
    <property type="nucleotide sequence ID" value="NC_010943.1"/>
</dbReference>
<dbReference type="SMR" id="B2FSD7"/>
<dbReference type="EnsemblBacteria" id="CAQ47191">
    <property type="protein sequence ID" value="CAQ47191"/>
    <property type="gene ID" value="Smlt3782"/>
</dbReference>
<dbReference type="GeneID" id="93834770"/>
<dbReference type="KEGG" id="sml:Smlt3782"/>
<dbReference type="eggNOG" id="COG1970">
    <property type="taxonomic scope" value="Bacteria"/>
</dbReference>
<dbReference type="HOGENOM" id="CLU_095787_0_0_6"/>
<dbReference type="Proteomes" id="UP000008840">
    <property type="component" value="Chromosome"/>
</dbReference>
<dbReference type="GO" id="GO:0005886">
    <property type="term" value="C:plasma membrane"/>
    <property type="evidence" value="ECO:0007669"/>
    <property type="project" value="UniProtKB-SubCell"/>
</dbReference>
<dbReference type="GO" id="GO:0008381">
    <property type="term" value="F:mechanosensitive monoatomic ion channel activity"/>
    <property type="evidence" value="ECO:0007669"/>
    <property type="project" value="UniProtKB-UniRule"/>
</dbReference>
<dbReference type="FunFam" id="1.10.1200.120:FF:000001">
    <property type="entry name" value="Large-conductance mechanosensitive channel"/>
    <property type="match status" value="1"/>
</dbReference>
<dbReference type="Gene3D" id="1.10.1200.120">
    <property type="entry name" value="Large-conductance mechanosensitive channel, MscL, domain 1"/>
    <property type="match status" value="1"/>
</dbReference>
<dbReference type="HAMAP" id="MF_00115">
    <property type="entry name" value="MscL"/>
    <property type="match status" value="1"/>
</dbReference>
<dbReference type="InterPro" id="IPR019823">
    <property type="entry name" value="Mechanosensitive_channel_CS"/>
</dbReference>
<dbReference type="InterPro" id="IPR001185">
    <property type="entry name" value="MS_channel"/>
</dbReference>
<dbReference type="InterPro" id="IPR037673">
    <property type="entry name" value="MSC/AndL"/>
</dbReference>
<dbReference type="InterPro" id="IPR036019">
    <property type="entry name" value="MscL_channel"/>
</dbReference>
<dbReference type="NCBIfam" id="TIGR00220">
    <property type="entry name" value="mscL"/>
    <property type="match status" value="1"/>
</dbReference>
<dbReference type="NCBIfam" id="NF001843">
    <property type="entry name" value="PRK00567.1-4"/>
    <property type="match status" value="1"/>
</dbReference>
<dbReference type="NCBIfam" id="NF010557">
    <property type="entry name" value="PRK13952.1"/>
    <property type="match status" value="1"/>
</dbReference>
<dbReference type="PANTHER" id="PTHR30266:SF2">
    <property type="entry name" value="LARGE-CONDUCTANCE MECHANOSENSITIVE CHANNEL"/>
    <property type="match status" value="1"/>
</dbReference>
<dbReference type="PANTHER" id="PTHR30266">
    <property type="entry name" value="MECHANOSENSITIVE CHANNEL MSCL"/>
    <property type="match status" value="1"/>
</dbReference>
<dbReference type="Pfam" id="PF01741">
    <property type="entry name" value="MscL"/>
    <property type="match status" value="1"/>
</dbReference>
<dbReference type="PRINTS" id="PR01264">
    <property type="entry name" value="MECHCHANNEL"/>
</dbReference>
<dbReference type="SUPFAM" id="SSF81330">
    <property type="entry name" value="Gated mechanosensitive channel"/>
    <property type="match status" value="1"/>
</dbReference>
<dbReference type="PROSITE" id="PS01327">
    <property type="entry name" value="MSCL"/>
    <property type="match status" value="1"/>
</dbReference>
<evidence type="ECO:0000255" key="1">
    <source>
        <dbReference type="HAMAP-Rule" id="MF_00115"/>
    </source>
</evidence>
<gene>
    <name evidence="1" type="primary">mscL</name>
    <name type="ordered locus">Smlt3782</name>
</gene>
<protein>
    <recommendedName>
        <fullName evidence="1">Large-conductance mechanosensitive channel</fullName>
    </recommendedName>
</protein>
<sequence length="134" mass="14461">MGMLTEFKEFAMRGNVIDLAVGVVIGAAFGKIVTALVEKIIMPPLGLLIGKVDFSQLAWTLSPARIGPDGKEIPAVVIGYGDFINTLIQFVIVAFAIFIVVKAINRLSRKQEAAPAAPAEEVVLLREIRDSLKK</sequence>
<organism>
    <name type="scientific">Stenotrophomonas maltophilia (strain K279a)</name>
    <dbReference type="NCBI Taxonomy" id="522373"/>
    <lineage>
        <taxon>Bacteria</taxon>
        <taxon>Pseudomonadati</taxon>
        <taxon>Pseudomonadota</taxon>
        <taxon>Gammaproteobacteria</taxon>
        <taxon>Lysobacterales</taxon>
        <taxon>Lysobacteraceae</taxon>
        <taxon>Stenotrophomonas</taxon>
        <taxon>Stenotrophomonas maltophilia group</taxon>
    </lineage>
</organism>
<proteinExistence type="inferred from homology"/>
<comment type="function">
    <text evidence="1">Channel that opens in response to stretch forces in the membrane lipid bilayer. May participate in the regulation of osmotic pressure changes within the cell.</text>
</comment>
<comment type="subunit">
    <text evidence="1">Homopentamer.</text>
</comment>
<comment type="subcellular location">
    <subcellularLocation>
        <location evidence="1">Cell inner membrane</location>
        <topology evidence="1">Multi-pass membrane protein</topology>
    </subcellularLocation>
</comment>
<comment type="similarity">
    <text evidence="1">Belongs to the MscL family.</text>
</comment>
<name>MSCL_STRMK</name>